<comment type="function">
    <text evidence="1">Antitoxin component of a type II toxin-antitoxin (TA) system. Labile antitoxin that binds to cognate MazF toxin and counteracts its endoribonuclease activity.</text>
</comment>
<comment type="subunit">
    <text evidence="1">Forms a complex with cognate toxin MazF which inhibits the endoribonuclease activity of MazF.</text>
</comment>
<comment type="similarity">
    <text evidence="2">Belongs to the MazE/EndoAI family.</text>
</comment>
<sequence>MLSFSQNRSHSLEQSLKEGYSQMADLNLSLANEAFPIECEACDCNETYLSSNSTNE</sequence>
<protein>
    <recommendedName>
        <fullName>Antitoxin MazE</fullName>
    </recommendedName>
</protein>
<gene>
    <name type="primary">mazE</name>
    <name type="ordered locus">SAHV_2054</name>
</gene>
<accession>A7X4P6</accession>
<dbReference type="EMBL" id="AP009324">
    <property type="protein sequence ID" value="BAF78937.1"/>
    <property type="molecule type" value="Genomic_DNA"/>
</dbReference>
<dbReference type="RefSeq" id="WP_000948331.1">
    <property type="nucleotide sequence ID" value="NZ_CTYB01000037.1"/>
</dbReference>
<dbReference type="SMR" id="A7X4P6"/>
<dbReference type="GeneID" id="98346377"/>
<dbReference type="KEGG" id="saw:SAHV_2054"/>
<dbReference type="HOGENOM" id="CLU_3012108_0_0_9"/>
<dbReference type="GO" id="GO:0006355">
    <property type="term" value="P:regulation of DNA-templated transcription"/>
    <property type="evidence" value="ECO:0007669"/>
    <property type="project" value="InterPro"/>
</dbReference>
<dbReference type="Gene3D" id="1.10.1220.10">
    <property type="entry name" value="Met repressor-like"/>
    <property type="match status" value="1"/>
</dbReference>
<dbReference type="InterPro" id="IPR013321">
    <property type="entry name" value="Arc_rbn_hlx_hlx"/>
</dbReference>
<dbReference type="InterPro" id="IPR048242">
    <property type="entry name" value="MazE"/>
</dbReference>
<dbReference type="NCBIfam" id="NF041459">
    <property type="entry name" value="antitoxMazE_Staph"/>
    <property type="match status" value="1"/>
</dbReference>
<keyword id="KW-1277">Toxin-antitoxin system</keyword>
<name>MAZE_STAA1</name>
<proteinExistence type="inferred from homology"/>
<evidence type="ECO:0000250" key="1">
    <source>
        <dbReference type="UniProtKB" id="P0C7B4"/>
    </source>
</evidence>
<evidence type="ECO:0000305" key="2"/>
<reference key="1">
    <citation type="journal article" date="2008" name="Antimicrob. Agents Chemother.">
        <title>Mutated response regulator graR is responsible for phenotypic conversion of Staphylococcus aureus from heterogeneous vancomycin-intermediate resistance to vancomycin-intermediate resistance.</title>
        <authorList>
            <person name="Neoh H.-M."/>
            <person name="Cui L."/>
            <person name="Yuzawa H."/>
            <person name="Takeuchi F."/>
            <person name="Matsuo M."/>
            <person name="Hiramatsu K."/>
        </authorList>
    </citation>
    <scope>NUCLEOTIDE SEQUENCE [LARGE SCALE GENOMIC DNA]</scope>
    <source>
        <strain>Mu3 / ATCC 700698</strain>
    </source>
</reference>
<organism>
    <name type="scientific">Staphylococcus aureus (strain Mu3 / ATCC 700698)</name>
    <dbReference type="NCBI Taxonomy" id="418127"/>
    <lineage>
        <taxon>Bacteria</taxon>
        <taxon>Bacillati</taxon>
        <taxon>Bacillota</taxon>
        <taxon>Bacilli</taxon>
        <taxon>Bacillales</taxon>
        <taxon>Staphylococcaceae</taxon>
        <taxon>Staphylococcus</taxon>
    </lineage>
</organism>
<feature type="chain" id="PRO_0000330714" description="Antitoxin MazE">
    <location>
        <begin position="1"/>
        <end position="56"/>
    </location>
</feature>